<sequence>MRTDQVMLSNKNTNTCCVVSSSSSDPFLSSSENGVTTTNTSTQKRKRRPAGTPDPDAEVVSLSPRTLLESDRYICEICNQGFQRDQNLQMHRRRHKVPWKLLKRDNNIEVKKRVYVCPEPTCLHHNPCHALGDLVGIKKHFRRKHSNHKQWVCERCSKGYAVQSDYKAHLKTCGTRGHSCDCGRVFSRVESFIEHQDNCSARRVHREPPRPPQTAVTVPACSSRTASTVSTPSSETNYGGTVAVTTPQPLEGRPIHQRISSSILTNSSNNLNLELQLLPLSSNQNPNQENQQQKVKEPSHHHNHNHDTTNLNLSIAPSSSYQHYNNFDRIKEIMASEQIMKIAMKEKAYAEEAKREAKRQREIAENEFANAKKIRQKAQAELERAKFLKEQSMKKISSTIMQVTCQTCKGQFQAVAVPAATADETSLVVSYMSSANTDGELENGF</sequence>
<protein>
    <recommendedName>
        <fullName evidence="10">Zinc finger protein SHOOT GRAVITROPISM 5</fullName>
    </recommendedName>
    <alternativeName>
        <fullName evidence="9">Protein indeterminate-domain 15</fullName>
        <shortName evidence="9">AtIDD15</shortName>
    </alternativeName>
</protein>
<feature type="chain" id="PRO_0000429060" description="Zinc finger protein SHOOT GRAVITROPISM 5">
    <location>
        <begin position="1"/>
        <end position="445"/>
    </location>
</feature>
<feature type="zinc finger region" description="C2H2-type 1" evidence="3">
    <location>
        <begin position="73"/>
        <end position="95"/>
    </location>
</feature>
<feature type="zinc finger region" description="C2H2-type 2" evidence="12">
    <location>
        <begin position="115"/>
        <end position="145"/>
    </location>
</feature>
<feature type="zinc finger region" description="C2H2-type 2" evidence="3">
    <location>
        <begin position="151"/>
        <end position="178"/>
    </location>
</feature>
<feature type="zinc finger region" description="CCHC-type 2; atypical" evidence="12">
    <location>
        <begin position="178"/>
        <end position="201"/>
    </location>
</feature>
<feature type="region of interest" description="Disordered" evidence="4">
    <location>
        <begin position="22"/>
        <end position="59"/>
    </location>
</feature>
<feature type="region of interest" description="SHR-binding" evidence="1">
    <location>
        <begin position="188"/>
        <end position="200"/>
    </location>
</feature>
<feature type="region of interest" description="Disordered" evidence="4">
    <location>
        <begin position="203"/>
        <end position="253"/>
    </location>
</feature>
<feature type="region of interest" description="Disordered" evidence="4">
    <location>
        <begin position="281"/>
        <end position="314"/>
    </location>
</feature>
<feature type="coiled-coil region" evidence="2">
    <location>
        <begin position="340"/>
        <end position="397"/>
    </location>
</feature>
<feature type="compositionally biased region" description="Low complexity" evidence="4">
    <location>
        <begin position="22"/>
        <end position="31"/>
    </location>
</feature>
<feature type="compositionally biased region" description="Polar residues" evidence="4">
    <location>
        <begin position="32"/>
        <end position="42"/>
    </location>
</feature>
<feature type="compositionally biased region" description="Polar residues" evidence="4">
    <location>
        <begin position="214"/>
        <end position="248"/>
    </location>
</feature>
<feature type="compositionally biased region" description="Low complexity" evidence="4">
    <location>
        <begin position="281"/>
        <end position="293"/>
    </location>
</feature>
<feature type="binding site" evidence="1">
    <location>
        <position position="153"/>
    </location>
    <ligand>
        <name>Zn(2+)</name>
        <dbReference type="ChEBI" id="CHEBI:29105"/>
        <label>1</label>
    </ligand>
</feature>
<feature type="binding site" evidence="1">
    <location>
        <position position="156"/>
    </location>
    <ligand>
        <name>Zn(2+)</name>
        <dbReference type="ChEBI" id="CHEBI:29105"/>
        <label>1</label>
    </ligand>
</feature>
<feature type="binding site" evidence="1">
    <location>
        <position position="169"/>
    </location>
    <ligand>
        <name>Zn(2+)</name>
        <dbReference type="ChEBI" id="CHEBI:29105"/>
        <label>1</label>
    </ligand>
</feature>
<feature type="binding site" evidence="1">
    <location>
        <position position="173"/>
    </location>
    <ligand>
        <name>Zn(2+)</name>
        <dbReference type="ChEBI" id="CHEBI:29105"/>
        <label>1</label>
    </ligand>
</feature>
<feature type="binding site" evidence="1">
    <location>
        <position position="180"/>
    </location>
    <ligand>
        <name>Zn(2+)</name>
        <dbReference type="ChEBI" id="CHEBI:29105"/>
        <label>2</label>
    </ligand>
</feature>
<feature type="binding site" evidence="1">
    <location>
        <position position="182"/>
    </location>
    <ligand>
        <name>Zn(2+)</name>
        <dbReference type="ChEBI" id="CHEBI:29105"/>
        <label>2</label>
    </ligand>
</feature>
<feature type="binding site" evidence="1">
    <location>
        <position position="195"/>
    </location>
    <ligand>
        <name>Zn(2+)</name>
        <dbReference type="ChEBI" id="CHEBI:29105"/>
        <label>2</label>
    </ligand>
</feature>
<feature type="binding site" evidence="1">
    <location>
        <position position="199"/>
    </location>
    <ligand>
        <name>Zn(2+)</name>
        <dbReference type="ChEBI" id="CHEBI:29105"/>
        <label>2</label>
    </ligand>
</feature>
<feature type="splice variant" id="VSP_054698" description="In isoform 2." evidence="11">
    <location>
        <begin position="1"/>
        <end position="89"/>
    </location>
</feature>
<feature type="splice variant" id="VSP_054699" description="In isoform 3." evidence="12">
    <original>RVFS</original>
    <variation>FFSSF</variation>
    <location>
        <begin position="184"/>
        <end position="187"/>
    </location>
</feature>
<feature type="mutagenesis site" description="In sgr5-1; weak gravitropic responses in inflorescence stems." evidence="5">
    <original>D</original>
    <variation>N</variation>
    <location>
        <position position="165"/>
    </location>
</feature>
<feature type="sequence conflict" description="In Ref. 3; BX819715." evidence="12" ref="3">
    <original>K</original>
    <variation>G</variation>
    <location>
        <position position="139"/>
    </location>
</feature>
<feature type="sequence conflict" description="In Ref. 3; BX819715." evidence="12" ref="3">
    <original>Q</original>
    <variation>R</variation>
    <location>
        <position position="150"/>
    </location>
</feature>
<feature type="sequence conflict" description="In Ref. 3; BX819715." evidence="12" ref="3">
    <original>R</original>
    <variation>S</variation>
    <location>
        <position position="155"/>
    </location>
</feature>
<feature type="sequence conflict" description="In Ref. 3; BX819715." evidence="12" ref="3">
    <original>S</original>
    <variation>R</variation>
    <location>
        <position position="230"/>
    </location>
</feature>
<evidence type="ECO:0000250" key="1">
    <source>
        <dbReference type="UniProtKB" id="Q700D2"/>
    </source>
</evidence>
<evidence type="ECO:0000255" key="2"/>
<evidence type="ECO:0000255" key="3">
    <source>
        <dbReference type="PROSITE-ProRule" id="PRU00042"/>
    </source>
</evidence>
<evidence type="ECO:0000256" key="4">
    <source>
        <dbReference type="SAM" id="MobiDB-lite"/>
    </source>
</evidence>
<evidence type="ECO:0000269" key="5">
    <source>
    </source>
</evidence>
<evidence type="ECO:0000269" key="6">
    <source>
    </source>
</evidence>
<evidence type="ECO:0000269" key="7">
    <source>
    </source>
</evidence>
<evidence type="ECO:0000269" key="8">
    <source>
    </source>
</evidence>
<evidence type="ECO:0000303" key="9">
    <source>
    </source>
</evidence>
<evidence type="ECO:0000303" key="10">
    <source>
    </source>
</evidence>
<evidence type="ECO:0000303" key="11">
    <source ref="4"/>
</evidence>
<evidence type="ECO:0000305" key="12"/>
<evidence type="ECO:0000312" key="13">
    <source>
        <dbReference type="Araport" id="AT2G01940"/>
    </source>
</evidence>
<evidence type="ECO:0000312" key="14">
    <source>
        <dbReference type="EMBL" id="AAD20087.1"/>
    </source>
</evidence>
<name>IDD15_ARATH</name>
<gene>
    <name evidence="10" type="primary">SGR5</name>
    <name evidence="9" type="synonym">IDD15</name>
    <name evidence="13" type="ordered locus">At2g01940</name>
    <name evidence="14" type="ORF">F14H20.1</name>
</gene>
<keyword id="KW-0025">Alternative splicing</keyword>
<keyword id="KW-0175">Coiled coil</keyword>
<keyword id="KW-0238">DNA-binding</keyword>
<keyword id="KW-0479">Metal-binding</keyword>
<keyword id="KW-0539">Nucleus</keyword>
<keyword id="KW-1185">Reference proteome</keyword>
<keyword id="KW-0677">Repeat</keyword>
<keyword id="KW-0804">Transcription</keyword>
<keyword id="KW-0805">Transcription regulation</keyword>
<keyword id="KW-0862">Zinc</keyword>
<keyword id="KW-0863">Zinc-finger</keyword>
<accession>F4IPE3</accession>
<accession>B3H5E9</accession>
<accession>Q0WVN8</accession>
<accession>Q2V4B1</accession>
<accession>Q9ZPT0</accession>
<dbReference type="EMBL" id="AC006532">
    <property type="protein sequence ID" value="AAD20087.1"/>
    <property type="status" value="ALT_INIT"/>
    <property type="molecule type" value="Genomic_DNA"/>
</dbReference>
<dbReference type="EMBL" id="CP002685">
    <property type="protein sequence ID" value="AEC05523.1"/>
    <property type="molecule type" value="Genomic_DNA"/>
</dbReference>
<dbReference type="EMBL" id="CP002685">
    <property type="protein sequence ID" value="AEC05524.1"/>
    <property type="molecule type" value="Genomic_DNA"/>
</dbReference>
<dbReference type="EMBL" id="CP002685">
    <property type="protein sequence ID" value="AEC05525.1"/>
    <property type="molecule type" value="Genomic_DNA"/>
</dbReference>
<dbReference type="EMBL" id="BX819715">
    <property type="status" value="NOT_ANNOTATED_CDS"/>
    <property type="molecule type" value="mRNA"/>
</dbReference>
<dbReference type="EMBL" id="AK226703">
    <property type="protein sequence ID" value="BAE98810.1"/>
    <property type="molecule type" value="mRNA"/>
</dbReference>
<dbReference type="PIR" id="A84431">
    <property type="entry name" value="A84431"/>
</dbReference>
<dbReference type="RefSeq" id="NP_001030949.2">
    <molecule id="F4IPE3-2"/>
    <property type="nucleotide sequence ID" value="NM_001035872.3"/>
</dbReference>
<dbReference type="RefSeq" id="NP_001077868.1">
    <molecule id="F4IPE3-3"/>
    <property type="nucleotide sequence ID" value="NM_001084399.1"/>
</dbReference>
<dbReference type="RefSeq" id="NP_178303.2">
    <molecule id="F4IPE3-1"/>
    <property type="nucleotide sequence ID" value="NM_126255.4"/>
</dbReference>
<dbReference type="BioGRID" id="128">
    <property type="interactions" value="18"/>
</dbReference>
<dbReference type="IntAct" id="F4IPE3">
    <property type="interactions" value="17"/>
</dbReference>
<dbReference type="STRING" id="3702.F4IPE3"/>
<dbReference type="PaxDb" id="3702-AT2G01940.3"/>
<dbReference type="ProteomicsDB" id="228780">
    <molecule id="F4IPE3-1"/>
</dbReference>
<dbReference type="EnsemblPlants" id="AT2G01940.1">
    <molecule id="F4IPE3-1"/>
    <property type="protein sequence ID" value="AT2G01940.1"/>
    <property type="gene ID" value="AT2G01940"/>
</dbReference>
<dbReference type="EnsemblPlants" id="AT2G01940.2">
    <molecule id="F4IPE3-2"/>
    <property type="protein sequence ID" value="AT2G01940.2"/>
    <property type="gene ID" value="AT2G01940"/>
</dbReference>
<dbReference type="EnsemblPlants" id="AT2G01940.3">
    <molecule id="F4IPE3-3"/>
    <property type="protein sequence ID" value="AT2G01940.3"/>
    <property type="gene ID" value="AT2G01940"/>
</dbReference>
<dbReference type="GeneID" id="814725"/>
<dbReference type="Gramene" id="AT2G01940.1">
    <molecule id="F4IPE3-1"/>
    <property type="protein sequence ID" value="AT2G01940.1"/>
    <property type="gene ID" value="AT2G01940"/>
</dbReference>
<dbReference type="Gramene" id="AT2G01940.2">
    <molecule id="F4IPE3-2"/>
    <property type="protein sequence ID" value="AT2G01940.2"/>
    <property type="gene ID" value="AT2G01940"/>
</dbReference>
<dbReference type="Gramene" id="AT2G01940.3">
    <molecule id="F4IPE3-3"/>
    <property type="protein sequence ID" value="AT2G01940.3"/>
    <property type="gene ID" value="AT2G01940"/>
</dbReference>
<dbReference type="KEGG" id="ath:AT2G01940"/>
<dbReference type="Araport" id="AT2G01940"/>
<dbReference type="TAIR" id="AT2G01940">
    <property type="gene designation" value="SGR5"/>
</dbReference>
<dbReference type="eggNOG" id="KOG1721">
    <property type="taxonomic scope" value="Eukaryota"/>
</dbReference>
<dbReference type="HOGENOM" id="CLU_014578_0_1_1"/>
<dbReference type="InParanoid" id="F4IPE3"/>
<dbReference type="OrthoDB" id="6354171at2759"/>
<dbReference type="PRO" id="PR:F4IPE3"/>
<dbReference type="Proteomes" id="UP000006548">
    <property type="component" value="Chromosome 2"/>
</dbReference>
<dbReference type="ExpressionAtlas" id="F4IPE3">
    <property type="expression patterns" value="baseline and differential"/>
</dbReference>
<dbReference type="GO" id="GO:0005634">
    <property type="term" value="C:nucleus"/>
    <property type="evidence" value="ECO:0000314"/>
    <property type="project" value="TAIR"/>
</dbReference>
<dbReference type="GO" id="GO:0003677">
    <property type="term" value="F:DNA binding"/>
    <property type="evidence" value="ECO:0007669"/>
    <property type="project" value="UniProtKB-KW"/>
</dbReference>
<dbReference type="GO" id="GO:0003700">
    <property type="term" value="F:DNA-binding transcription factor activity"/>
    <property type="evidence" value="ECO:0000250"/>
    <property type="project" value="TAIR"/>
</dbReference>
<dbReference type="GO" id="GO:0008270">
    <property type="term" value="F:zinc ion binding"/>
    <property type="evidence" value="ECO:0007669"/>
    <property type="project" value="UniProtKB-KW"/>
</dbReference>
<dbReference type="GO" id="GO:0010031">
    <property type="term" value="P:circumnutation"/>
    <property type="evidence" value="ECO:0000315"/>
    <property type="project" value="TAIR"/>
</dbReference>
<dbReference type="GO" id="GO:0009590">
    <property type="term" value="P:detection of gravity"/>
    <property type="evidence" value="ECO:0000315"/>
    <property type="project" value="TAIR"/>
</dbReference>
<dbReference type="GO" id="GO:0048444">
    <property type="term" value="P:floral organ morphogenesis"/>
    <property type="evidence" value="ECO:0000316"/>
    <property type="project" value="TAIR"/>
</dbReference>
<dbReference type="GO" id="GO:0009630">
    <property type="term" value="P:gravitropism"/>
    <property type="evidence" value="ECO:0000316"/>
    <property type="project" value="TAIR"/>
</dbReference>
<dbReference type="GO" id="GO:0009965">
    <property type="term" value="P:leaf morphogenesis"/>
    <property type="evidence" value="ECO:0000316"/>
    <property type="project" value="TAIR"/>
</dbReference>
<dbReference type="GO" id="GO:0009959">
    <property type="term" value="P:negative gravitropism"/>
    <property type="evidence" value="ECO:0000315"/>
    <property type="project" value="TAIR"/>
</dbReference>
<dbReference type="GO" id="GO:0010601">
    <property type="term" value="P:positive regulation of auxin biosynthetic process"/>
    <property type="evidence" value="ECO:0000316"/>
    <property type="project" value="TAIR"/>
</dbReference>
<dbReference type="GO" id="GO:2000012">
    <property type="term" value="P:regulation of auxin polar transport"/>
    <property type="evidence" value="ECO:0000316"/>
    <property type="project" value="TAIR"/>
</dbReference>
<dbReference type="GO" id="GO:0006355">
    <property type="term" value="P:regulation of DNA-templated transcription"/>
    <property type="evidence" value="ECO:0000304"/>
    <property type="project" value="TAIR"/>
</dbReference>
<dbReference type="GO" id="GO:2000904">
    <property type="term" value="P:regulation of starch metabolic process"/>
    <property type="evidence" value="ECO:0000315"/>
    <property type="project" value="TAIR"/>
</dbReference>
<dbReference type="FunFam" id="3.30.160.60:FF:000554">
    <property type="entry name" value="protein indeterminate-domain 12-like"/>
    <property type="match status" value="1"/>
</dbReference>
<dbReference type="Gene3D" id="3.30.160.60">
    <property type="entry name" value="Classic Zinc Finger"/>
    <property type="match status" value="2"/>
</dbReference>
<dbReference type="InterPro" id="IPR055187">
    <property type="entry name" value="C2CH-3rd_BIRD-IDD"/>
</dbReference>
<dbReference type="InterPro" id="IPR055185">
    <property type="entry name" value="C2CH-4th_BIRD-IDD"/>
</dbReference>
<dbReference type="InterPro" id="IPR055186">
    <property type="entry name" value="C2H2-2nd_BIRD-IDD"/>
</dbReference>
<dbReference type="InterPro" id="IPR031140">
    <property type="entry name" value="IDD1-16"/>
</dbReference>
<dbReference type="InterPro" id="IPR036236">
    <property type="entry name" value="Znf_C2H2_sf"/>
</dbReference>
<dbReference type="InterPro" id="IPR013087">
    <property type="entry name" value="Znf_C2H2_type"/>
</dbReference>
<dbReference type="PANTHER" id="PTHR10593:SF221">
    <property type="entry name" value="PROTEIN INDETERMINATE-DOMAIN 14"/>
    <property type="match status" value="1"/>
</dbReference>
<dbReference type="PANTHER" id="PTHR10593">
    <property type="entry name" value="SERINE/THREONINE-PROTEIN KINASE RIO"/>
    <property type="match status" value="1"/>
</dbReference>
<dbReference type="Pfam" id="PF22995">
    <property type="entry name" value="C2CH-3rd_BIRD-IDD"/>
    <property type="match status" value="1"/>
</dbReference>
<dbReference type="Pfam" id="PF22992">
    <property type="entry name" value="C2CH-4th_BIRD-IDD"/>
    <property type="match status" value="1"/>
</dbReference>
<dbReference type="Pfam" id="PF22996">
    <property type="entry name" value="C2H2-2nd_BIRD-IDD"/>
    <property type="match status" value="1"/>
</dbReference>
<dbReference type="Pfam" id="PF12874">
    <property type="entry name" value="zf-met"/>
    <property type="match status" value="1"/>
</dbReference>
<dbReference type="SMART" id="SM00355">
    <property type="entry name" value="ZnF_C2H2"/>
    <property type="match status" value="3"/>
</dbReference>
<dbReference type="SUPFAM" id="SSF57667">
    <property type="entry name" value="beta-beta-alpha zinc fingers"/>
    <property type="match status" value="1"/>
</dbReference>
<dbReference type="PROSITE" id="PS00028">
    <property type="entry name" value="ZINC_FINGER_C2H2_1"/>
    <property type="match status" value="1"/>
</dbReference>
<dbReference type="PROSITE" id="PS50157">
    <property type="entry name" value="ZINC_FINGER_C2H2_2"/>
    <property type="match status" value="1"/>
</dbReference>
<proteinExistence type="evidence at protein level"/>
<organism>
    <name type="scientific">Arabidopsis thaliana</name>
    <name type="common">Mouse-ear cress</name>
    <dbReference type="NCBI Taxonomy" id="3702"/>
    <lineage>
        <taxon>Eukaryota</taxon>
        <taxon>Viridiplantae</taxon>
        <taxon>Streptophyta</taxon>
        <taxon>Embryophyta</taxon>
        <taxon>Tracheophyta</taxon>
        <taxon>Spermatophyta</taxon>
        <taxon>Magnoliopsida</taxon>
        <taxon>eudicotyledons</taxon>
        <taxon>Gunneridae</taxon>
        <taxon>Pentapetalae</taxon>
        <taxon>rosids</taxon>
        <taxon>malvids</taxon>
        <taxon>Brassicales</taxon>
        <taxon>Brassicaceae</taxon>
        <taxon>Camelineae</taxon>
        <taxon>Arabidopsis</taxon>
    </lineage>
</organism>
<reference key="1">
    <citation type="journal article" date="1999" name="Nature">
        <title>Sequence and analysis of chromosome 2 of the plant Arabidopsis thaliana.</title>
        <authorList>
            <person name="Lin X."/>
            <person name="Kaul S."/>
            <person name="Rounsley S.D."/>
            <person name="Shea T.P."/>
            <person name="Benito M.-I."/>
            <person name="Town C.D."/>
            <person name="Fujii C.Y."/>
            <person name="Mason T.M."/>
            <person name="Bowman C.L."/>
            <person name="Barnstead M.E."/>
            <person name="Feldblyum T.V."/>
            <person name="Buell C.R."/>
            <person name="Ketchum K.A."/>
            <person name="Lee J.J."/>
            <person name="Ronning C.M."/>
            <person name="Koo H.L."/>
            <person name="Moffat K.S."/>
            <person name="Cronin L.A."/>
            <person name="Shen M."/>
            <person name="Pai G."/>
            <person name="Van Aken S."/>
            <person name="Umayam L."/>
            <person name="Tallon L.J."/>
            <person name="Gill J.E."/>
            <person name="Adams M.D."/>
            <person name="Carrera A.J."/>
            <person name="Creasy T.H."/>
            <person name="Goodman H.M."/>
            <person name="Somerville C.R."/>
            <person name="Copenhaver G.P."/>
            <person name="Preuss D."/>
            <person name="Nierman W.C."/>
            <person name="White O."/>
            <person name="Eisen J.A."/>
            <person name="Salzberg S.L."/>
            <person name="Fraser C.M."/>
            <person name="Venter J.C."/>
        </authorList>
    </citation>
    <scope>NUCLEOTIDE SEQUENCE [LARGE SCALE GENOMIC DNA]</scope>
    <source>
        <strain>cv. Columbia</strain>
    </source>
</reference>
<reference key="2">
    <citation type="journal article" date="2017" name="Plant J.">
        <title>Araport11: a complete reannotation of the Arabidopsis thaliana reference genome.</title>
        <authorList>
            <person name="Cheng C.Y."/>
            <person name="Krishnakumar V."/>
            <person name="Chan A.P."/>
            <person name="Thibaud-Nissen F."/>
            <person name="Schobel S."/>
            <person name="Town C.D."/>
        </authorList>
    </citation>
    <scope>GENOME REANNOTATION</scope>
    <source>
        <strain>cv. Columbia</strain>
    </source>
</reference>
<reference key="3">
    <citation type="journal article" date="2004" name="Genome Res.">
        <title>Whole genome sequence comparisons and 'full-length' cDNA sequences: a combined approach to evaluate and improve Arabidopsis genome annotation.</title>
        <authorList>
            <person name="Castelli V."/>
            <person name="Aury J.-M."/>
            <person name="Jaillon O."/>
            <person name="Wincker P."/>
            <person name="Clepet C."/>
            <person name="Menard M."/>
            <person name="Cruaud C."/>
            <person name="Quetier F."/>
            <person name="Scarpelli C."/>
            <person name="Schaechter V."/>
            <person name="Temple G."/>
            <person name="Caboche M."/>
            <person name="Weissenbach J."/>
            <person name="Salanoubat M."/>
        </authorList>
    </citation>
    <scope>NUCLEOTIDE SEQUENCE [LARGE SCALE MRNA] (ISOFORM 1)</scope>
    <source>
        <strain>cv. Columbia</strain>
    </source>
</reference>
<reference key="4">
    <citation type="submission" date="2006-07" db="EMBL/GenBank/DDBJ databases">
        <title>Large-scale analysis of RIKEN Arabidopsis full-length (RAFL) cDNAs.</title>
        <authorList>
            <person name="Totoki Y."/>
            <person name="Seki M."/>
            <person name="Ishida J."/>
            <person name="Nakajima M."/>
            <person name="Enju A."/>
            <person name="Kamiya A."/>
            <person name="Narusaka M."/>
            <person name="Shin-i T."/>
            <person name="Nakagawa M."/>
            <person name="Sakamoto N."/>
            <person name="Oishi K."/>
            <person name="Kohara Y."/>
            <person name="Kobayashi M."/>
            <person name="Toyoda A."/>
            <person name="Sakaki Y."/>
            <person name="Sakurai T."/>
            <person name="Iida K."/>
            <person name="Akiyama K."/>
            <person name="Satou M."/>
            <person name="Toyoda T."/>
            <person name="Konagaya A."/>
            <person name="Carninci P."/>
            <person name="Kawai J."/>
            <person name="Hayashizaki Y."/>
            <person name="Shinozaki K."/>
        </authorList>
    </citation>
    <scope>NUCLEOTIDE SEQUENCE [LARGE SCALE MRNA] (ISOFORM 2)</scope>
    <source>
        <strain>cv. Columbia</strain>
    </source>
</reference>
<reference key="5">
    <citation type="journal article" date="1997" name="Plant Cell Physiol.">
        <title>Mutations in the SGR4, SGR5 and SGR6 loci of Arabidopsis thaliana alter the shoot gravitropism.</title>
        <authorList>
            <person name="Yamauchi Y."/>
            <person name="Fukaki H."/>
            <person name="Fujisawa H."/>
            <person name="Tasaka M."/>
        </authorList>
    </citation>
    <scope>FUNCTION</scope>
    <scope>DISRUPTION PHENOTYPE</scope>
    <source>
        <strain>cv. Columbia</strain>
    </source>
</reference>
<reference key="6">
    <citation type="journal article" date="2004" name="BMC Genomics">
        <title>Conservation, diversification and expansion of C2H2 zinc finger proteins in the Arabidopsis thaliana genome.</title>
        <authorList>
            <person name="Englbrecht C.C."/>
            <person name="Schoof H."/>
            <person name="Boehm S."/>
        </authorList>
    </citation>
    <scope>GENE FAMILY</scope>
</reference>
<reference key="7">
    <citation type="journal article" date="2006" name="BMC Genomics">
        <title>The maize INDETERMINATE1 flowering time regulator defines a highly conserved zinc finger protein family in higher plants.</title>
        <authorList>
            <person name="Colasanti J."/>
            <person name="Tremblay R."/>
            <person name="Wong A.Y."/>
            <person name="Coneva V."/>
            <person name="Kozaki A."/>
            <person name="Mable B.K."/>
        </authorList>
    </citation>
    <scope>GENE FAMILY</scope>
    <scope>NOMENCLATURE</scope>
</reference>
<reference key="8">
    <citation type="journal article" date="2006" name="Plant J.">
        <title>A C2H2-type zinc finger protein, SGR5, is involved in early events of gravitropism in Arabidopsis inflorescence stems.</title>
        <authorList>
            <person name="Morita M.T."/>
            <person name="Sakaguchi K."/>
            <person name="Kiyose S."/>
            <person name="Taira K."/>
            <person name="Kato T."/>
            <person name="Nakamura M."/>
            <person name="Tasaka M."/>
        </authorList>
    </citation>
    <scope>FUNCTION</scope>
    <scope>DISRUPTION PHENOTYPE</scope>
    <scope>MUTAGENESIS OF ASP-165</scope>
    <scope>SUBCELLULAR LOCATION</scope>
    <scope>TISSUE SPECIFICITY</scope>
    <scope>DEVELOPMENTAL STAGE</scope>
    <source>
        <strain>cv. Columbia</strain>
        <strain>cv. Landsberg erecta</strain>
    </source>
</reference>
<reference key="9">
    <citation type="journal article" date="2008" name="Plant Mol. Biol.">
        <title>Altered gravitropic response, amyloplast sedimentation and circumnutation in the Arabidopsis shoot gravitropism 5 mutant are associated with reduced starch levels.</title>
        <authorList>
            <person name="Tanimoto M."/>
            <person name="Tremblay R."/>
            <person name="Colasanti J."/>
        </authorList>
    </citation>
    <scope>FUNCTION</scope>
    <scope>DISRUPTION PHENOTYPE</scope>
    <source>
        <strain>cv. Columbia</strain>
        <strain>cv. Landsberg erecta</strain>
    </source>
</reference>
<reference key="10">
    <citation type="journal article" date="2013" name="PLoS Genet.">
        <title>The arabidopsis IDD14, IDD15, and IDD16 cooperatively regulate lateral organ morphogenesis and gravitropism by promoting auxin biosynthesis and transport.</title>
        <authorList>
            <person name="Cui D."/>
            <person name="Zhao J."/>
            <person name="Jing Y."/>
            <person name="Fan M."/>
            <person name="Liu J."/>
            <person name="Wang Z."/>
            <person name="Xin W."/>
            <person name="Hu Y."/>
        </authorList>
    </citation>
    <scope>FUNCTION</scope>
    <scope>TISSUE SPECIFICITY</scope>
    <scope>DISRUPTION PHENOTYPE</scope>
    <scope>INDUCTION BY AUXIN</scope>
</reference>
<comment type="function">
    <text evidence="5 6 7 8">Transcription factor involved in inflorescence stems gravitropism, probably by regulating starch accumulation in amyloplasts of graviperceptive cells. Required for stem circumnutation movements. Regulates lateral organ morphogenesis and gravitropic responses (PubMed:24039602). Acts cooperatively with IDD16 to control silique and branche orientation (PubMed:24039602). Involved in the establishment of auxin gradients through the regulation of auxin biosynthesis and transport (PubMed:24039602).</text>
</comment>
<comment type="interaction">
    <interactant intactId="EBI-15192881">
        <id>F4IPE3</id>
    </interactant>
    <interactant intactId="EBI-15192195">
        <id>B9DHT4</id>
        <label>ARIA</label>
    </interactant>
    <organismsDiffer>false</organismsDiffer>
    <experiments>3</experiments>
</comment>
<comment type="interaction">
    <interactant intactId="EBI-15192881">
        <id>F4IPE3</id>
    </interactant>
    <interactant intactId="EBI-15192535">
        <id>F4JI72</id>
        <label>At4g03250</label>
    </interactant>
    <organismsDiffer>false</organismsDiffer>
    <experiments>4</experiments>
</comment>
<comment type="interaction">
    <interactant intactId="EBI-15192881">
        <id>F4IPE3</id>
    </interactant>
    <interactant intactId="EBI-15197527">
        <id>Q8L925</id>
        <label>CRC</label>
    </interactant>
    <organismsDiffer>false</organismsDiffer>
    <experiments>3</experiments>
</comment>
<comment type="interaction">
    <interactant intactId="EBI-15192881">
        <id>F4IPE3</id>
    </interactant>
    <interactant intactId="EBI-15191579">
        <id>Q9C9X7</id>
        <label>IDD14</label>
    </interactant>
    <organismsDiffer>false</organismsDiffer>
    <experiments>5</experiments>
</comment>
<comment type="subcellular location">
    <subcellularLocation>
        <location evidence="5">Nucleus</location>
    </subcellularLocation>
</comment>
<comment type="alternative products">
    <event type="alternative splicing"/>
    <isoform>
        <id>F4IPE3-1</id>
        <name>1</name>
        <sequence type="displayed"/>
    </isoform>
    <isoform>
        <id>F4IPE3-2</id>
        <name>2</name>
        <sequence type="described" ref="VSP_054698"/>
    </isoform>
    <isoform>
        <id>F4IPE3-3</id>
        <name>3</name>
        <sequence type="described" ref="VSP_054699"/>
    </isoform>
</comment>
<comment type="tissue specificity">
    <text evidence="5">Mainly expressed in the endodermis, the gravity-sensing tissue in inflorescence stems. Mostly present in stems and flowers, and, to a lower extent, in seedlings, hypocotyls, roots and the shoot apical meristem (SAM).</text>
</comment>
<comment type="developmental stage">
    <text evidence="5">Expression levels gradually decrease with aging in both the shoot and root vasculature.</text>
</comment>
<comment type="induction">
    <text evidence="7">Not regulated by auxin.</text>
</comment>
<comment type="disruption phenotype">
    <text evidence="5 6 7 8">In sgr5-2 and sgr5-3, abnormal inflorescence stems gravitropism but normal hypocotyl and root gravitropism. Slow amyloplasts sedimentation associated with lower amyloplast starch levels. Attenuated stem circumnutation movement. No visible phenotype (PubMed:24039602).</text>
</comment>
<comment type="sequence caution" evidence="12">
    <conflict type="erroneous initiation">
        <sequence resource="EMBL-CDS" id="AAD20087"/>
    </conflict>
    <text>Truncated N-terminus.</text>
</comment>
<comment type="sequence caution" evidence="12">
    <conflict type="frameshift">
        <sequence resource="EMBL" id="BX819715"/>
    </conflict>
</comment>